<gene>
    <name type="primary">egd1</name>
    <name type="ORF">AN8746</name>
</gene>
<comment type="function">
    <text evidence="1">Component of the nascent polypeptide-associated complex (NAC), a dynamic component of the ribosomal exit tunnel, protecting the emerging polypeptides from interaction with other cytoplasmic proteins to ensure appropriate nascent protein targeting. The NAC complex also promotes mitochondrial protein import by enhancing productive ribosome interactions with the outer mitochondrial membrane and blocks the inappropriate interaction of ribosomes translating non-secretory nascent polypeptides with translocation sites in the membrane of the endoplasmic reticulum. EGD1 may act as a transcription factor that exert a negative effect on the expression of several genes that are transcribed by RNA polymerase II.</text>
</comment>
<comment type="subunit">
    <text evidence="1">Part of the nascent polypeptide-associated complex (NAC), consisting of egd2 and egd1. NAC associates with ribosomes via egd1 (By similarity).</text>
</comment>
<comment type="subcellular location">
    <subcellularLocation>
        <location evidence="1">Cytoplasm</location>
    </subcellularLocation>
    <subcellularLocation>
        <location evidence="1">Nucleus</location>
    </subcellularLocation>
    <text evidence="1">Predominantly cytoplasmic, may also transiently localize to the nucleus.</text>
</comment>
<comment type="similarity">
    <text evidence="4">Belongs to the NAC-beta family.</text>
</comment>
<sequence>MDQAKLARMQASVRIGGKGTPRRKVKKVHKTSGADDKKLQATLKKMNVQPIQAIEEVNMFKEDGNVIHFAAPKEERALTVGCEIKVHASVPSNTFALYGNGEEKELTELVPGILNQLGPDSLASLRKLAESYQNMQKNQAGEKKDDDEDDIPDLVEGENFEKSVD</sequence>
<proteinExistence type="inferred from homology"/>
<feature type="chain" id="PRO_0000273510" description="Nascent polypeptide-associated complex subunit beta">
    <location>
        <begin position="1"/>
        <end position="165"/>
    </location>
</feature>
<feature type="domain" description="NAC-A/B" evidence="2">
    <location>
        <begin position="33"/>
        <end position="110"/>
    </location>
</feature>
<feature type="region of interest" description="Disordered" evidence="3">
    <location>
        <begin position="1"/>
        <end position="34"/>
    </location>
</feature>
<feature type="region of interest" description="Disordered" evidence="3">
    <location>
        <begin position="133"/>
        <end position="165"/>
    </location>
</feature>
<feature type="compositionally biased region" description="Basic residues" evidence="3">
    <location>
        <begin position="20"/>
        <end position="30"/>
    </location>
</feature>
<feature type="compositionally biased region" description="Acidic residues" evidence="3">
    <location>
        <begin position="145"/>
        <end position="158"/>
    </location>
</feature>
<organism>
    <name type="scientific">Emericella nidulans (strain FGSC A4 / ATCC 38163 / CBS 112.46 / NRRL 194 / M139)</name>
    <name type="common">Aspergillus nidulans</name>
    <dbReference type="NCBI Taxonomy" id="227321"/>
    <lineage>
        <taxon>Eukaryota</taxon>
        <taxon>Fungi</taxon>
        <taxon>Dikarya</taxon>
        <taxon>Ascomycota</taxon>
        <taxon>Pezizomycotina</taxon>
        <taxon>Eurotiomycetes</taxon>
        <taxon>Eurotiomycetidae</taxon>
        <taxon>Eurotiales</taxon>
        <taxon>Aspergillaceae</taxon>
        <taxon>Aspergillus</taxon>
        <taxon>Aspergillus subgen. Nidulantes</taxon>
    </lineage>
</organism>
<evidence type="ECO:0000250" key="1"/>
<evidence type="ECO:0000255" key="2">
    <source>
        <dbReference type="PROSITE-ProRule" id="PRU00507"/>
    </source>
</evidence>
<evidence type="ECO:0000256" key="3">
    <source>
        <dbReference type="SAM" id="MobiDB-lite"/>
    </source>
</evidence>
<evidence type="ECO:0000305" key="4"/>
<reference key="1">
    <citation type="journal article" date="2005" name="Nature">
        <title>Sequencing of Aspergillus nidulans and comparative analysis with A. fumigatus and A. oryzae.</title>
        <authorList>
            <person name="Galagan J.E."/>
            <person name="Calvo S.E."/>
            <person name="Cuomo C."/>
            <person name="Ma L.-J."/>
            <person name="Wortman J.R."/>
            <person name="Batzoglou S."/>
            <person name="Lee S.-I."/>
            <person name="Bastuerkmen M."/>
            <person name="Spevak C.C."/>
            <person name="Clutterbuck J."/>
            <person name="Kapitonov V."/>
            <person name="Jurka J."/>
            <person name="Scazzocchio C."/>
            <person name="Farman M.L."/>
            <person name="Butler J."/>
            <person name="Purcell S."/>
            <person name="Harris S."/>
            <person name="Braus G.H."/>
            <person name="Draht O."/>
            <person name="Busch S."/>
            <person name="D'Enfert C."/>
            <person name="Bouchier C."/>
            <person name="Goldman G.H."/>
            <person name="Bell-Pedersen D."/>
            <person name="Griffiths-Jones S."/>
            <person name="Doonan J.H."/>
            <person name="Yu J."/>
            <person name="Vienken K."/>
            <person name="Pain A."/>
            <person name="Freitag M."/>
            <person name="Selker E.U."/>
            <person name="Archer D.B."/>
            <person name="Penalva M.A."/>
            <person name="Oakley B.R."/>
            <person name="Momany M."/>
            <person name="Tanaka T."/>
            <person name="Kumagai T."/>
            <person name="Asai K."/>
            <person name="Machida M."/>
            <person name="Nierman W.C."/>
            <person name="Denning D.W."/>
            <person name="Caddick M.X."/>
            <person name="Hynes M."/>
            <person name="Paoletti M."/>
            <person name="Fischer R."/>
            <person name="Miller B.L."/>
            <person name="Dyer P.S."/>
            <person name="Sachs M.S."/>
            <person name="Osmani S.A."/>
            <person name="Birren B.W."/>
        </authorList>
    </citation>
    <scope>NUCLEOTIDE SEQUENCE [LARGE SCALE GENOMIC DNA]</scope>
    <source>
        <strain>FGSC A4 / ATCC 38163 / CBS 112.46 / NRRL 194 / M139</strain>
    </source>
</reference>
<reference key="2">
    <citation type="journal article" date="2009" name="Fungal Genet. Biol.">
        <title>The 2008 update of the Aspergillus nidulans genome annotation: a community effort.</title>
        <authorList>
            <person name="Wortman J.R."/>
            <person name="Gilsenan J.M."/>
            <person name="Joardar V."/>
            <person name="Deegan J."/>
            <person name="Clutterbuck J."/>
            <person name="Andersen M.R."/>
            <person name="Archer D."/>
            <person name="Bencina M."/>
            <person name="Braus G."/>
            <person name="Coutinho P."/>
            <person name="von Dohren H."/>
            <person name="Doonan J."/>
            <person name="Driessen A.J."/>
            <person name="Durek P."/>
            <person name="Espeso E."/>
            <person name="Fekete E."/>
            <person name="Flipphi M."/>
            <person name="Estrada C.G."/>
            <person name="Geysens S."/>
            <person name="Goldman G."/>
            <person name="de Groot P.W."/>
            <person name="Hansen K."/>
            <person name="Harris S.D."/>
            <person name="Heinekamp T."/>
            <person name="Helmstaedt K."/>
            <person name="Henrissat B."/>
            <person name="Hofmann G."/>
            <person name="Homan T."/>
            <person name="Horio T."/>
            <person name="Horiuchi H."/>
            <person name="James S."/>
            <person name="Jones M."/>
            <person name="Karaffa L."/>
            <person name="Karanyi Z."/>
            <person name="Kato M."/>
            <person name="Keller N."/>
            <person name="Kelly D.E."/>
            <person name="Kiel J.A."/>
            <person name="Kim J.M."/>
            <person name="van der Klei I.J."/>
            <person name="Klis F.M."/>
            <person name="Kovalchuk A."/>
            <person name="Krasevec N."/>
            <person name="Kubicek C.P."/>
            <person name="Liu B."/>
            <person name="Maccabe A."/>
            <person name="Meyer V."/>
            <person name="Mirabito P."/>
            <person name="Miskei M."/>
            <person name="Mos M."/>
            <person name="Mullins J."/>
            <person name="Nelson D.R."/>
            <person name="Nielsen J."/>
            <person name="Oakley B.R."/>
            <person name="Osmani S.A."/>
            <person name="Pakula T."/>
            <person name="Paszewski A."/>
            <person name="Paulsen I."/>
            <person name="Pilsyk S."/>
            <person name="Pocsi I."/>
            <person name="Punt P.J."/>
            <person name="Ram A.F."/>
            <person name="Ren Q."/>
            <person name="Robellet X."/>
            <person name="Robson G."/>
            <person name="Seiboth B."/>
            <person name="van Solingen P."/>
            <person name="Specht T."/>
            <person name="Sun J."/>
            <person name="Taheri-Talesh N."/>
            <person name="Takeshita N."/>
            <person name="Ussery D."/>
            <person name="vanKuyk P.A."/>
            <person name="Visser H."/>
            <person name="van de Vondervoort P.J."/>
            <person name="de Vries R.P."/>
            <person name="Walton J."/>
            <person name="Xiang X."/>
            <person name="Xiong Y."/>
            <person name="Zeng A.P."/>
            <person name="Brandt B.W."/>
            <person name="Cornell M.J."/>
            <person name="van den Hondel C.A."/>
            <person name="Visser J."/>
            <person name="Oliver S.G."/>
            <person name="Turner G."/>
        </authorList>
    </citation>
    <scope>GENOME REANNOTATION</scope>
    <source>
        <strain>FGSC A4 / ATCC 38163 / CBS 112.46 / NRRL 194 / M139</strain>
    </source>
</reference>
<accession>Q5ASI4</accession>
<dbReference type="EMBL" id="AACD01000161">
    <property type="protein sequence ID" value="EAA60539.1"/>
    <property type="molecule type" value="Genomic_DNA"/>
</dbReference>
<dbReference type="EMBL" id="BN001303">
    <property type="status" value="NOT_ANNOTATED_CDS"/>
    <property type="molecule type" value="Genomic_DNA"/>
</dbReference>
<dbReference type="RefSeq" id="XP_682015.1">
    <property type="nucleotide sequence ID" value="XM_676923.1"/>
</dbReference>
<dbReference type="SMR" id="Q5ASI4"/>
<dbReference type="FunCoup" id="Q5ASI4">
    <property type="interactions" value="1217"/>
</dbReference>
<dbReference type="STRING" id="227321.Q5ASI4"/>
<dbReference type="HOGENOM" id="CLU_098726_2_0_1"/>
<dbReference type="InParanoid" id="Q5ASI4"/>
<dbReference type="Proteomes" id="UP000000560">
    <property type="component" value="Chromosome III"/>
</dbReference>
<dbReference type="GO" id="GO:0005829">
    <property type="term" value="C:cytosol"/>
    <property type="evidence" value="ECO:0000318"/>
    <property type="project" value="GO_Central"/>
</dbReference>
<dbReference type="GO" id="GO:0005854">
    <property type="term" value="C:nascent polypeptide-associated complex"/>
    <property type="evidence" value="ECO:0000318"/>
    <property type="project" value="GO_Central"/>
</dbReference>
<dbReference type="GO" id="GO:0005634">
    <property type="term" value="C:nucleus"/>
    <property type="evidence" value="ECO:0007669"/>
    <property type="project" value="UniProtKB-SubCell"/>
</dbReference>
<dbReference type="GO" id="GO:0015031">
    <property type="term" value="P:protein transport"/>
    <property type="evidence" value="ECO:0007669"/>
    <property type="project" value="UniProtKB-KW"/>
</dbReference>
<dbReference type="CDD" id="cd22055">
    <property type="entry name" value="NAC_BTF3"/>
    <property type="match status" value="1"/>
</dbReference>
<dbReference type="FunFam" id="2.20.70.30:FF:000003">
    <property type="entry name" value="Nascent polypeptide-associated complex subunit beta"/>
    <property type="match status" value="1"/>
</dbReference>
<dbReference type="Gene3D" id="2.20.70.30">
    <property type="entry name" value="Nascent polypeptide-associated complex domain"/>
    <property type="match status" value="1"/>
</dbReference>
<dbReference type="InterPro" id="IPR039370">
    <property type="entry name" value="BTF3"/>
</dbReference>
<dbReference type="InterPro" id="IPR038187">
    <property type="entry name" value="NAC_A/B_dom_sf"/>
</dbReference>
<dbReference type="InterPro" id="IPR002715">
    <property type="entry name" value="Nas_poly-pep-assoc_cplx_dom"/>
</dbReference>
<dbReference type="PANTHER" id="PTHR10351">
    <property type="entry name" value="TRANSCRIPTION FACTOR BTF3 FAMILY MEMBER"/>
    <property type="match status" value="1"/>
</dbReference>
<dbReference type="Pfam" id="PF01849">
    <property type="entry name" value="NAC"/>
    <property type="match status" value="1"/>
</dbReference>
<dbReference type="SMART" id="SM01407">
    <property type="entry name" value="NAC"/>
    <property type="match status" value="1"/>
</dbReference>
<dbReference type="PROSITE" id="PS51151">
    <property type="entry name" value="NAC_AB"/>
    <property type="match status" value="1"/>
</dbReference>
<keyword id="KW-0963">Cytoplasm</keyword>
<keyword id="KW-0539">Nucleus</keyword>
<keyword id="KW-0653">Protein transport</keyword>
<keyword id="KW-1185">Reference proteome</keyword>
<keyword id="KW-0678">Repressor</keyword>
<keyword id="KW-0804">Transcription</keyword>
<keyword id="KW-0805">Transcription regulation</keyword>
<keyword id="KW-0813">Transport</keyword>
<name>NACB_EMENI</name>
<protein>
    <recommendedName>
        <fullName>Nascent polypeptide-associated complex subunit beta</fullName>
        <shortName>NAC-beta</shortName>
    </recommendedName>
    <alternativeName>
        <fullName>Beta-NAC</fullName>
    </alternativeName>
</protein>